<keyword id="KW-0903">Direct protein sequencing</keyword>
<keyword id="KW-1015">Disulfide bond</keyword>
<keyword id="KW-0325">Glycoprotein</keyword>
<keyword id="KW-1199">Hemostasis impairing toxin</keyword>
<keyword id="KW-0378">Hydrolase</keyword>
<keyword id="KW-0645">Protease</keyword>
<keyword id="KW-0964">Secreted</keyword>
<keyword id="KW-0720">Serine protease</keyword>
<keyword id="KW-0732">Signal</keyword>
<keyword id="KW-0800">Toxin</keyword>
<keyword id="KW-0865">Zymogen</keyword>
<protein>
    <recommendedName>
        <fullName evidence="4">Snake venom serine protease rhinocerase 4</fullName>
        <shortName evidence="4">BG-RHIN4</shortName>
        <shortName>SVSP</shortName>
        <ecNumber>3.4.21.-</ecNumber>
    </recommendedName>
</protein>
<dbReference type="EC" id="3.4.21.-"/>
<dbReference type="EMBL" id="FN868647">
    <property type="protein sequence ID" value="CBM40647.1"/>
    <property type="molecule type" value="Genomic_DNA"/>
</dbReference>
<dbReference type="SMR" id="D8MIA2"/>
<dbReference type="MEROPS" id="S01.334"/>
<dbReference type="GO" id="GO:0005576">
    <property type="term" value="C:extracellular region"/>
    <property type="evidence" value="ECO:0007669"/>
    <property type="project" value="UniProtKB-SubCell"/>
</dbReference>
<dbReference type="GO" id="GO:0030141">
    <property type="term" value="C:secretory granule"/>
    <property type="evidence" value="ECO:0007669"/>
    <property type="project" value="TreeGrafter"/>
</dbReference>
<dbReference type="GO" id="GO:0004252">
    <property type="term" value="F:serine-type endopeptidase activity"/>
    <property type="evidence" value="ECO:0007669"/>
    <property type="project" value="InterPro"/>
</dbReference>
<dbReference type="GO" id="GO:0090729">
    <property type="term" value="F:toxin activity"/>
    <property type="evidence" value="ECO:0007669"/>
    <property type="project" value="UniProtKB-KW"/>
</dbReference>
<dbReference type="GO" id="GO:0006508">
    <property type="term" value="P:proteolysis"/>
    <property type="evidence" value="ECO:0007669"/>
    <property type="project" value="UniProtKB-KW"/>
</dbReference>
<dbReference type="CDD" id="cd00190">
    <property type="entry name" value="Tryp_SPc"/>
    <property type="match status" value="1"/>
</dbReference>
<dbReference type="FunFam" id="2.40.10.10:FF:000010">
    <property type="entry name" value="Kallikrein related peptidase 11"/>
    <property type="match status" value="1"/>
</dbReference>
<dbReference type="Gene3D" id="2.40.10.10">
    <property type="entry name" value="Trypsin-like serine proteases"/>
    <property type="match status" value="2"/>
</dbReference>
<dbReference type="InterPro" id="IPR009003">
    <property type="entry name" value="Peptidase_S1_PA"/>
</dbReference>
<dbReference type="InterPro" id="IPR043504">
    <property type="entry name" value="Peptidase_S1_PA_chymotrypsin"/>
</dbReference>
<dbReference type="InterPro" id="IPR001314">
    <property type="entry name" value="Peptidase_S1A"/>
</dbReference>
<dbReference type="InterPro" id="IPR001254">
    <property type="entry name" value="Trypsin_dom"/>
</dbReference>
<dbReference type="InterPro" id="IPR018114">
    <property type="entry name" value="TRYPSIN_HIS"/>
</dbReference>
<dbReference type="InterPro" id="IPR033116">
    <property type="entry name" value="TRYPSIN_SER"/>
</dbReference>
<dbReference type="PANTHER" id="PTHR24271:SF47">
    <property type="entry name" value="KALLIKREIN-1"/>
    <property type="match status" value="1"/>
</dbReference>
<dbReference type="PANTHER" id="PTHR24271">
    <property type="entry name" value="KALLIKREIN-RELATED"/>
    <property type="match status" value="1"/>
</dbReference>
<dbReference type="Pfam" id="PF00089">
    <property type="entry name" value="Trypsin"/>
    <property type="match status" value="1"/>
</dbReference>
<dbReference type="PRINTS" id="PR00722">
    <property type="entry name" value="CHYMOTRYPSIN"/>
</dbReference>
<dbReference type="SMART" id="SM00020">
    <property type="entry name" value="Tryp_SPc"/>
    <property type="match status" value="1"/>
</dbReference>
<dbReference type="SUPFAM" id="SSF50494">
    <property type="entry name" value="Trypsin-like serine proteases"/>
    <property type="match status" value="1"/>
</dbReference>
<dbReference type="PROSITE" id="PS50240">
    <property type="entry name" value="TRYPSIN_DOM"/>
    <property type="match status" value="1"/>
</dbReference>
<dbReference type="PROSITE" id="PS00134">
    <property type="entry name" value="TRYPSIN_HIS"/>
    <property type="match status" value="1"/>
</dbReference>
<dbReference type="PROSITE" id="PS00135">
    <property type="entry name" value="TRYPSIN_SER"/>
    <property type="match status" value="1"/>
</dbReference>
<feature type="signal peptide" evidence="1">
    <location>
        <begin position="1" status="less than"/>
        <end position="17"/>
    </location>
</feature>
<feature type="propeptide" id="PRO_0000455650" evidence="6">
    <location>
        <begin position="18"/>
        <end position="23"/>
    </location>
</feature>
<feature type="chain" id="PRO_5003117874" description="Snake venom serine protease rhinocerase 4">
    <location>
        <begin position="24"/>
        <end position="257"/>
    </location>
</feature>
<feature type="domain" description="Peptidase S1" evidence="2">
    <location>
        <begin position="24"/>
        <end position="248"/>
    </location>
</feature>
<feature type="active site" description="Charge relay system" evidence="2">
    <location>
        <position position="64"/>
    </location>
</feature>
<feature type="active site" description="Charge relay system" evidence="2">
    <location>
        <position position="109"/>
    </location>
</feature>
<feature type="active site" description="Charge relay system" evidence="2">
    <location>
        <position position="203"/>
    </location>
</feature>
<feature type="glycosylation site" description="N-linked (GlcNAc...) asparagine" evidence="1">
    <location>
        <position position="43"/>
    </location>
</feature>
<feature type="glycosylation site" description="N-linked (GlcNAc...) asparagine" evidence="1">
    <location>
        <position position="78"/>
    </location>
</feature>
<feature type="glycosylation site" description="N-linked (GlcNAc...) asparagine" evidence="1">
    <location>
        <position position="100"/>
    </location>
</feature>
<feature type="glycosylation site" description="N-linked (GlcNAc...) asparagine" evidence="1">
    <location>
        <position position="250"/>
    </location>
</feature>
<feature type="disulfide bond" evidence="2">
    <location>
        <begin position="30"/>
        <end position="162"/>
    </location>
</feature>
<feature type="disulfide bond" evidence="2">
    <location>
        <begin position="49"/>
        <end position="65"/>
    </location>
</feature>
<feature type="disulfide bond" evidence="2">
    <location>
        <begin position="97"/>
        <end position="255"/>
    </location>
</feature>
<feature type="disulfide bond" evidence="2">
    <location>
        <begin position="141"/>
        <end position="209"/>
    </location>
</feature>
<feature type="disulfide bond" evidence="2">
    <location>
        <begin position="173"/>
        <end position="188"/>
    </location>
</feature>
<feature type="disulfide bond" evidence="2">
    <location>
        <begin position="199"/>
        <end position="224"/>
    </location>
</feature>
<feature type="non-terminal residue" evidence="5">
    <location>
        <position position="1"/>
    </location>
</feature>
<proteinExistence type="evidence at protein level"/>
<name>VSPR4_BITRH</name>
<reference key="1">
    <citation type="journal article" date="2011" name="PLoS ONE">
        <title>Evolutionary analysis of novel serine proteases in the venom gland transcriptome of Bitis gabonica rhinoceros.</title>
        <authorList>
            <person name="Vaiyapuri S."/>
            <person name="Wagstaff S.C."/>
            <person name="Harrison R.A."/>
            <person name="Gibbins J.M."/>
            <person name="Hutchinson E.G."/>
        </authorList>
    </citation>
    <scope>NUCLEOTIDE SEQUENCE [GENOMIC DNA]</scope>
    <scope>ISOLATION</scope>
    <source>
        <tissue>Venom</tissue>
        <tissue>Venom gland</tissue>
    </source>
</reference>
<reference key="2">
    <citation type="journal article" date="2007" name="J. Proteome Res.">
        <title>Snake venomics of Bitis species reveals large intragenus venom toxin composition variation: application to taxonomy of congeneric taxa.</title>
        <authorList>
            <person name="Calvete J.J."/>
            <person name="Escolano J."/>
            <person name="Sanz L."/>
        </authorList>
    </citation>
    <scope>PROTEIN SEQUENCE OF 24-38</scope>
    <scope>SUBCELLULAR LOCATION</scope>
    <source>
        <tissue>Venom</tissue>
    </source>
</reference>
<sequence>VLIRVLANLLVLQLSYAQKSSELVIGGAECNINEHRSLALVYNSSGLLCCGILINQEWVLSAAHCDMENMQIYLGLHNISRPNQDQKRRVPKQKFFCLSNKTYTRWDKDIMLIKLNSPVPYSTHIAPLSLPSSPPIVGSVCRIMGWGATKSPNENVPHVPHCANINILHYSVCRATYGRLPAKSRTLCAGIPRRRIGSCLGDSGGPLICNGQVEGIVSWASKPCVHNGAPGMYTKVYDYTDWIRSIIGGNTSATCPL</sequence>
<accession>D8MIA2</accession>
<comment type="function">
    <text evidence="5">Snake venom serine protease that may act in the hemostasis system of the prey.</text>
</comment>
<comment type="subcellular location">
    <subcellularLocation>
        <location evidence="3">Secreted</location>
    </subcellularLocation>
</comment>
<comment type="tissue specificity">
    <text evidence="6">Expressed by the venom gland.</text>
</comment>
<comment type="similarity">
    <text evidence="5">Belongs to the peptidase S1 family. Snake venom subfamily.</text>
</comment>
<evidence type="ECO:0000255" key="1"/>
<evidence type="ECO:0000255" key="2">
    <source>
        <dbReference type="PROSITE-ProRule" id="PRU00274"/>
    </source>
</evidence>
<evidence type="ECO:0000269" key="3">
    <source>
    </source>
</evidence>
<evidence type="ECO:0000303" key="4">
    <source>
    </source>
</evidence>
<evidence type="ECO:0000305" key="5"/>
<evidence type="ECO:0000305" key="6">
    <source>
    </source>
</evidence>
<organism>
    <name type="scientific">Bitis rhinoceros</name>
    <name type="common">West African gaboon viper</name>
    <name type="synonym">Vipera rhinoceros</name>
    <dbReference type="NCBI Taxonomy" id="715877"/>
    <lineage>
        <taxon>Eukaryota</taxon>
        <taxon>Metazoa</taxon>
        <taxon>Chordata</taxon>
        <taxon>Craniata</taxon>
        <taxon>Vertebrata</taxon>
        <taxon>Euteleostomi</taxon>
        <taxon>Lepidosauria</taxon>
        <taxon>Squamata</taxon>
        <taxon>Bifurcata</taxon>
        <taxon>Unidentata</taxon>
        <taxon>Episquamata</taxon>
        <taxon>Toxicofera</taxon>
        <taxon>Serpentes</taxon>
        <taxon>Colubroidea</taxon>
        <taxon>Viperidae</taxon>
        <taxon>Viperinae</taxon>
        <taxon>Bitis</taxon>
    </lineage>
</organism>